<dbReference type="EC" id="3.6.1.9" evidence="1"/>
<dbReference type="EMBL" id="BA000030">
    <property type="protein sequence ID" value="BAC71046.1"/>
    <property type="molecule type" value="Genomic_DNA"/>
</dbReference>
<dbReference type="RefSeq" id="WP_010984765.1">
    <property type="nucleotide sequence ID" value="NZ_JZJK01000090.1"/>
</dbReference>
<dbReference type="SMR" id="Q82I23"/>
<dbReference type="GeneID" id="41540409"/>
<dbReference type="KEGG" id="sma:SAVERM_3335"/>
<dbReference type="eggNOG" id="COG0424">
    <property type="taxonomic scope" value="Bacteria"/>
</dbReference>
<dbReference type="HOGENOM" id="CLU_040416_1_2_11"/>
<dbReference type="OrthoDB" id="3527985at2"/>
<dbReference type="Proteomes" id="UP000000428">
    <property type="component" value="Chromosome"/>
</dbReference>
<dbReference type="GO" id="GO:0005737">
    <property type="term" value="C:cytoplasm"/>
    <property type="evidence" value="ECO:0007669"/>
    <property type="project" value="UniProtKB-SubCell"/>
</dbReference>
<dbReference type="GO" id="GO:0047429">
    <property type="term" value="F:nucleoside triphosphate diphosphatase activity"/>
    <property type="evidence" value="ECO:0007669"/>
    <property type="project" value="UniProtKB-EC"/>
</dbReference>
<dbReference type="GO" id="GO:0009117">
    <property type="term" value="P:nucleotide metabolic process"/>
    <property type="evidence" value="ECO:0007669"/>
    <property type="project" value="UniProtKB-KW"/>
</dbReference>
<dbReference type="CDD" id="cd00555">
    <property type="entry name" value="Maf"/>
    <property type="match status" value="1"/>
</dbReference>
<dbReference type="FunFam" id="3.90.950.10:FF:000010">
    <property type="entry name" value="Nucleoside triphosphate pyrophosphatase"/>
    <property type="match status" value="1"/>
</dbReference>
<dbReference type="Gene3D" id="3.90.950.10">
    <property type="match status" value="1"/>
</dbReference>
<dbReference type="HAMAP" id="MF_00528">
    <property type="entry name" value="Maf"/>
    <property type="match status" value="1"/>
</dbReference>
<dbReference type="InterPro" id="IPR029001">
    <property type="entry name" value="ITPase-like_fam"/>
</dbReference>
<dbReference type="InterPro" id="IPR003697">
    <property type="entry name" value="Maf-like"/>
</dbReference>
<dbReference type="NCBIfam" id="TIGR00172">
    <property type="entry name" value="maf"/>
    <property type="match status" value="1"/>
</dbReference>
<dbReference type="PANTHER" id="PTHR43213">
    <property type="entry name" value="BIFUNCTIONAL DTTP/UTP PYROPHOSPHATASE/METHYLTRANSFERASE PROTEIN-RELATED"/>
    <property type="match status" value="1"/>
</dbReference>
<dbReference type="PANTHER" id="PTHR43213:SF5">
    <property type="entry name" value="BIFUNCTIONAL DTTP_UTP PYROPHOSPHATASE_METHYLTRANSFERASE PROTEIN-RELATED"/>
    <property type="match status" value="1"/>
</dbReference>
<dbReference type="Pfam" id="PF02545">
    <property type="entry name" value="Maf"/>
    <property type="match status" value="1"/>
</dbReference>
<dbReference type="PIRSF" id="PIRSF006305">
    <property type="entry name" value="Maf"/>
    <property type="match status" value="1"/>
</dbReference>
<dbReference type="SUPFAM" id="SSF52972">
    <property type="entry name" value="ITPase-like"/>
    <property type="match status" value="1"/>
</dbReference>
<proteinExistence type="inferred from homology"/>
<evidence type="ECO:0000255" key="1">
    <source>
        <dbReference type="HAMAP-Rule" id="MF_00528"/>
    </source>
</evidence>
<comment type="function">
    <text evidence="1">Nucleoside triphosphate pyrophosphatase. May have a dual role in cell division arrest and in preventing the incorporation of modified nucleotides into cellular nucleic acids.</text>
</comment>
<comment type="catalytic activity">
    <reaction evidence="1">
        <text>a ribonucleoside 5'-triphosphate + H2O = a ribonucleoside 5'-phosphate + diphosphate + H(+)</text>
        <dbReference type="Rhea" id="RHEA:23996"/>
        <dbReference type="ChEBI" id="CHEBI:15377"/>
        <dbReference type="ChEBI" id="CHEBI:15378"/>
        <dbReference type="ChEBI" id="CHEBI:33019"/>
        <dbReference type="ChEBI" id="CHEBI:58043"/>
        <dbReference type="ChEBI" id="CHEBI:61557"/>
        <dbReference type="EC" id="3.6.1.9"/>
    </reaction>
</comment>
<comment type="catalytic activity">
    <reaction evidence="1">
        <text>a 2'-deoxyribonucleoside 5'-triphosphate + H2O = a 2'-deoxyribonucleoside 5'-phosphate + diphosphate + H(+)</text>
        <dbReference type="Rhea" id="RHEA:44644"/>
        <dbReference type="ChEBI" id="CHEBI:15377"/>
        <dbReference type="ChEBI" id="CHEBI:15378"/>
        <dbReference type="ChEBI" id="CHEBI:33019"/>
        <dbReference type="ChEBI" id="CHEBI:61560"/>
        <dbReference type="ChEBI" id="CHEBI:65317"/>
        <dbReference type="EC" id="3.6.1.9"/>
    </reaction>
</comment>
<comment type="cofactor">
    <cofactor evidence="1">
        <name>a divalent metal cation</name>
        <dbReference type="ChEBI" id="CHEBI:60240"/>
    </cofactor>
</comment>
<comment type="subcellular location">
    <subcellularLocation>
        <location evidence="1">Cytoplasm</location>
    </subcellularLocation>
</comment>
<comment type="similarity">
    <text evidence="1">Belongs to the Maf family.</text>
</comment>
<sequence>MTDQPRRRLVLASQSPARLNLLRQAGLDPEVIVSGFDEDRLSAPTPAELALALAEAKASVVAAKPEVQGALVIGCDSVLDLDGEALGKPADAEEATARWKAMRGRAGTLQTGHCIYDTASKRYASATASTVVRFGEPTDEEIAAYVASGEPLHVAGAFTLDGRSAPFIEGIDGDHGNVIGISLPTVRRLLGELGVGITQLWTPREK</sequence>
<feature type="chain" id="PRO_0000123061" description="Nucleoside triphosphate pyrophosphatase">
    <location>
        <begin position="1"/>
        <end position="206"/>
    </location>
</feature>
<feature type="active site" description="Proton acceptor" evidence="1">
    <location>
        <position position="76"/>
    </location>
</feature>
<organism>
    <name type="scientific">Streptomyces avermitilis (strain ATCC 31267 / DSM 46492 / JCM 5070 / NBRC 14893 / NCIMB 12804 / NRRL 8165 / MA-4680)</name>
    <dbReference type="NCBI Taxonomy" id="227882"/>
    <lineage>
        <taxon>Bacteria</taxon>
        <taxon>Bacillati</taxon>
        <taxon>Actinomycetota</taxon>
        <taxon>Actinomycetes</taxon>
        <taxon>Kitasatosporales</taxon>
        <taxon>Streptomycetaceae</taxon>
        <taxon>Streptomyces</taxon>
    </lineage>
</organism>
<keyword id="KW-0963">Cytoplasm</keyword>
<keyword id="KW-0378">Hydrolase</keyword>
<keyword id="KW-0546">Nucleotide metabolism</keyword>
<keyword id="KW-1185">Reference proteome</keyword>
<accession>Q82I23</accession>
<name>NTPP_STRAW</name>
<reference key="1">
    <citation type="journal article" date="2001" name="Proc. Natl. Acad. Sci. U.S.A.">
        <title>Genome sequence of an industrial microorganism Streptomyces avermitilis: deducing the ability of producing secondary metabolites.</title>
        <authorList>
            <person name="Omura S."/>
            <person name="Ikeda H."/>
            <person name="Ishikawa J."/>
            <person name="Hanamoto A."/>
            <person name="Takahashi C."/>
            <person name="Shinose M."/>
            <person name="Takahashi Y."/>
            <person name="Horikawa H."/>
            <person name="Nakazawa H."/>
            <person name="Osonoe T."/>
            <person name="Kikuchi H."/>
            <person name="Shiba T."/>
            <person name="Sakaki Y."/>
            <person name="Hattori M."/>
        </authorList>
    </citation>
    <scope>NUCLEOTIDE SEQUENCE [LARGE SCALE GENOMIC DNA]</scope>
    <source>
        <strain>ATCC 31267 / DSM 46492 / JCM 5070 / NBRC 14893 / NCIMB 12804 / NRRL 8165 / MA-4680</strain>
    </source>
</reference>
<reference key="2">
    <citation type="journal article" date="2003" name="Nat. Biotechnol.">
        <title>Complete genome sequence and comparative analysis of the industrial microorganism Streptomyces avermitilis.</title>
        <authorList>
            <person name="Ikeda H."/>
            <person name="Ishikawa J."/>
            <person name="Hanamoto A."/>
            <person name="Shinose M."/>
            <person name="Kikuchi H."/>
            <person name="Shiba T."/>
            <person name="Sakaki Y."/>
            <person name="Hattori M."/>
            <person name="Omura S."/>
        </authorList>
    </citation>
    <scope>NUCLEOTIDE SEQUENCE [LARGE SCALE GENOMIC DNA]</scope>
    <source>
        <strain>ATCC 31267 / DSM 46492 / JCM 5070 / NBRC 14893 / NCIMB 12804 / NRRL 8165 / MA-4680</strain>
    </source>
</reference>
<gene>
    <name type="ordered locus">SAV_3335</name>
</gene>
<protein>
    <recommendedName>
        <fullName evidence="1">Nucleoside triphosphate pyrophosphatase</fullName>
        <ecNumber evidence="1">3.6.1.9</ecNumber>
    </recommendedName>
    <alternativeName>
        <fullName evidence="1">Nucleotide pyrophosphatase</fullName>
        <shortName evidence="1">Nucleotide PPase</shortName>
    </alternativeName>
</protein>